<reference key="1">
    <citation type="journal article" date="2006" name="Mol. Microbiol.">
        <title>Role of pathogenicity island-associated integrases in the genome plasticity of uropathogenic Escherichia coli strain 536.</title>
        <authorList>
            <person name="Hochhut B."/>
            <person name="Wilde C."/>
            <person name="Balling G."/>
            <person name="Middendorf B."/>
            <person name="Dobrindt U."/>
            <person name="Brzuszkiewicz E."/>
            <person name="Gottschalk G."/>
            <person name="Carniel E."/>
            <person name="Hacker J."/>
        </authorList>
    </citation>
    <scope>NUCLEOTIDE SEQUENCE [LARGE SCALE GENOMIC DNA]</scope>
    <source>
        <strain>536 / UPEC</strain>
    </source>
</reference>
<accession>Q0T9N8</accession>
<evidence type="ECO:0000255" key="1">
    <source>
        <dbReference type="HAMAP-Rule" id="MF_00709"/>
    </source>
</evidence>
<gene>
    <name evidence="1" type="primary">frdD</name>
    <name type="ordered locus">ECP_4397</name>
</gene>
<proteinExistence type="inferred from homology"/>
<organism>
    <name type="scientific">Escherichia coli O6:K15:H31 (strain 536 / UPEC)</name>
    <dbReference type="NCBI Taxonomy" id="362663"/>
    <lineage>
        <taxon>Bacteria</taxon>
        <taxon>Pseudomonadati</taxon>
        <taxon>Pseudomonadota</taxon>
        <taxon>Gammaproteobacteria</taxon>
        <taxon>Enterobacterales</taxon>
        <taxon>Enterobacteriaceae</taxon>
        <taxon>Escherichia</taxon>
    </lineage>
</organism>
<name>FRDD_ECOL5</name>
<protein>
    <recommendedName>
        <fullName evidence="1">Fumarate reductase subunit D</fullName>
    </recommendedName>
    <alternativeName>
        <fullName evidence="1">Fumarate reductase 13 kDa hydrophobic protein</fullName>
    </alternativeName>
    <alternativeName>
        <fullName evidence="1">Quinol-fumarate reductase subunit D</fullName>
        <shortName evidence="1">QFR subunit D</shortName>
    </alternativeName>
</protein>
<feature type="chain" id="PRO_1000045546" description="Fumarate reductase subunit D">
    <location>
        <begin position="1"/>
        <end position="119"/>
    </location>
</feature>
<feature type="transmembrane region" description="Helical" evidence="1">
    <location>
        <begin position="26"/>
        <end position="46"/>
    </location>
</feature>
<feature type="transmembrane region" description="Helical" evidence="1">
    <location>
        <begin position="55"/>
        <end position="75"/>
    </location>
</feature>
<feature type="transmembrane region" description="Helical" evidence="1">
    <location>
        <begin position="99"/>
        <end position="119"/>
    </location>
</feature>
<keyword id="KW-0997">Cell inner membrane</keyword>
<keyword id="KW-1003">Cell membrane</keyword>
<keyword id="KW-0472">Membrane</keyword>
<keyword id="KW-0812">Transmembrane</keyword>
<keyword id="KW-1133">Transmembrane helix</keyword>
<comment type="function">
    <text evidence="1">Two distinct, membrane-bound, FAD-containing enzymes are responsible for the catalysis of fumarate and succinate interconversion; fumarate reductase is used in anaerobic growth, and succinate dehydrogenase is used in aerobic growth. Anchors the catalytic components of the fumarate reductase complex to the cell inner membrane, binds quinones.</text>
</comment>
<comment type="subunit">
    <text evidence="1">Part of an enzyme complex containing four subunits: a flavoprotein (FrdA), an iron-sulfur protein (FrdB), and two hydrophobic anchor proteins (FrdC and FrdD).</text>
</comment>
<comment type="subcellular location">
    <subcellularLocation>
        <location evidence="1">Cell inner membrane</location>
        <topology evidence="1">Multi-pass membrane protein</topology>
    </subcellularLocation>
</comment>
<comment type="similarity">
    <text evidence="1">Belongs to the FrdD family.</text>
</comment>
<sequence>MINPNPKRSDEPVFWGLFGAGGMWSAIIAPVMILLVGILLPLGLFPGDALSYERVLAFAQSFIGRVFLFLMIVLPLWCGLHRMHHAMHDLKIHVPAGKWVFYGLAAILTVVTLIGVVTI</sequence>
<dbReference type="EMBL" id="CP000247">
    <property type="protein sequence ID" value="ABG72341.1"/>
    <property type="molecule type" value="Genomic_DNA"/>
</dbReference>
<dbReference type="RefSeq" id="WP_000609663.1">
    <property type="nucleotide sequence ID" value="NC_008253.1"/>
</dbReference>
<dbReference type="SMR" id="Q0T9N8"/>
<dbReference type="GeneID" id="75169672"/>
<dbReference type="KEGG" id="ecp:ECP_4397"/>
<dbReference type="HOGENOM" id="CLU_168367_0_0_6"/>
<dbReference type="Proteomes" id="UP000009182">
    <property type="component" value="Chromosome"/>
</dbReference>
<dbReference type="GO" id="GO:0045283">
    <property type="term" value="C:fumarate reductase complex"/>
    <property type="evidence" value="ECO:0007669"/>
    <property type="project" value="UniProtKB-UniRule"/>
</dbReference>
<dbReference type="GO" id="GO:0005886">
    <property type="term" value="C:plasma membrane"/>
    <property type="evidence" value="ECO:0007669"/>
    <property type="project" value="UniProtKB-SubCell"/>
</dbReference>
<dbReference type="GO" id="GO:0000104">
    <property type="term" value="F:succinate dehydrogenase activity"/>
    <property type="evidence" value="ECO:0007669"/>
    <property type="project" value="UniProtKB-UniRule"/>
</dbReference>
<dbReference type="GO" id="GO:0006106">
    <property type="term" value="P:fumarate metabolic process"/>
    <property type="evidence" value="ECO:0007669"/>
    <property type="project" value="InterPro"/>
</dbReference>
<dbReference type="CDD" id="cd00547">
    <property type="entry name" value="QFR_TypeD_subunitD"/>
    <property type="match status" value="1"/>
</dbReference>
<dbReference type="FunFam" id="1.20.1300.10:FF:000002">
    <property type="entry name" value="Fumarate reductase subunit D"/>
    <property type="match status" value="1"/>
</dbReference>
<dbReference type="Gene3D" id="1.20.1300.10">
    <property type="entry name" value="Fumarate reductase/succinate dehydrogenase, transmembrane subunit"/>
    <property type="match status" value="1"/>
</dbReference>
<dbReference type="HAMAP" id="MF_00709">
    <property type="entry name" value="Fumarate_red_D"/>
    <property type="match status" value="1"/>
</dbReference>
<dbReference type="InterPro" id="IPR003418">
    <property type="entry name" value="Fumarate_red_D"/>
</dbReference>
<dbReference type="InterPro" id="IPR034804">
    <property type="entry name" value="SQR/QFR_C/D"/>
</dbReference>
<dbReference type="NCBIfam" id="NF003977">
    <property type="entry name" value="PRK05470.1-1"/>
    <property type="match status" value="1"/>
</dbReference>
<dbReference type="Pfam" id="PF02313">
    <property type="entry name" value="Fumarate_red_D"/>
    <property type="match status" value="1"/>
</dbReference>
<dbReference type="PIRSF" id="PIRSF000179">
    <property type="entry name" value="FrdD"/>
    <property type="match status" value="1"/>
</dbReference>
<dbReference type="SUPFAM" id="SSF81343">
    <property type="entry name" value="Fumarate reductase respiratory complex transmembrane subunits"/>
    <property type="match status" value="1"/>
</dbReference>